<protein>
    <recommendedName>
        <fullName>Ferritin light chain 1</fullName>
    </recommendedName>
    <alternativeName>
        <fullName>Ferritin L subunit 1</fullName>
    </alternativeName>
</protein>
<evidence type="ECO:0000250" key="1"/>
<evidence type="ECO:0000250" key="2">
    <source>
        <dbReference type="UniProtKB" id="P02792"/>
    </source>
</evidence>
<evidence type="ECO:0000250" key="3">
    <source>
        <dbReference type="UniProtKB" id="P29391"/>
    </source>
</evidence>
<evidence type="ECO:0000255" key="4">
    <source>
        <dbReference type="PROSITE-ProRule" id="PRU00085"/>
    </source>
</evidence>
<evidence type="ECO:0000305" key="5"/>
<organism>
    <name type="scientific">Rattus norvegicus</name>
    <name type="common">Rat</name>
    <dbReference type="NCBI Taxonomy" id="10116"/>
    <lineage>
        <taxon>Eukaryota</taxon>
        <taxon>Metazoa</taxon>
        <taxon>Chordata</taxon>
        <taxon>Craniata</taxon>
        <taxon>Vertebrata</taxon>
        <taxon>Euteleostomi</taxon>
        <taxon>Mammalia</taxon>
        <taxon>Eutheria</taxon>
        <taxon>Euarchontoglires</taxon>
        <taxon>Glires</taxon>
        <taxon>Rodentia</taxon>
        <taxon>Myomorpha</taxon>
        <taxon>Muroidea</taxon>
        <taxon>Muridae</taxon>
        <taxon>Murinae</taxon>
        <taxon>Rattus</taxon>
    </lineage>
</organism>
<comment type="function">
    <text evidence="1 2">Stores iron in a soluble, non-toxic, readily available form. Important for iron homeostasis. Iron is taken up in the ferrous form and deposited as ferric hydroxides after oxidation. Also plays a role in delivery of iron to cells. Mediates iron uptake in capsule cells of the developing kidney (By similarity). Delivery to lysosomes by the cargo receptor NCOA4 for autophagic degradation and release or iron (By similarity).</text>
</comment>
<comment type="subunit">
    <text evidence="2">Oligomer of 24 subunits. There are two types of subunits: L (light) chain and H (heavy) chain. The major chain can be light or heavy, depending on the species and tissue type. The functional molecule forms a roughly spherical shell with a diameter of 12 nm and contains a central cavity into which the insoluble mineral iron core is deposited. Interacts with NCOA4 (By similarity).</text>
</comment>
<comment type="subcellular location">
    <subcellularLocation>
        <location evidence="2">Cytoplasmic vesicle</location>
        <location evidence="2">Autophagosome</location>
    </subcellularLocation>
    <subcellularLocation>
        <location evidence="3">Cytoplasm</location>
    </subcellularLocation>
    <subcellularLocation>
        <location evidence="3">Autolysosome</location>
    </subcellularLocation>
</comment>
<comment type="tissue specificity">
    <text>In rat liver, the light chain is the major chain.</text>
</comment>
<comment type="domain">
    <text>The rat light chain has an octopeptide insertion after residue 158 compared with other light chains.</text>
</comment>
<comment type="similarity">
    <text evidence="5">Belongs to the ferritin family.</text>
</comment>
<dbReference type="EMBL" id="K01930">
    <property type="protein sequence ID" value="AAA41154.1"/>
    <property type="molecule type" value="mRNA"/>
</dbReference>
<dbReference type="EMBL" id="J02741">
    <property type="protein sequence ID" value="AAA41155.1"/>
    <property type="molecule type" value="Genomic_DNA"/>
</dbReference>
<dbReference type="EMBL" id="L01122">
    <property type="protein sequence ID" value="AAA41152.1"/>
    <property type="molecule type" value="mRNA"/>
</dbReference>
<dbReference type="EMBL" id="BC061525">
    <property type="protein sequence ID" value="AAH61525.1"/>
    <property type="molecule type" value="mRNA"/>
</dbReference>
<dbReference type="EMBL" id="BC086583">
    <property type="protein sequence ID" value="AAH86583.1"/>
    <property type="molecule type" value="mRNA"/>
</dbReference>
<dbReference type="EMBL" id="BC088756">
    <property type="protein sequence ID" value="AAH88756.1"/>
    <property type="molecule type" value="mRNA"/>
</dbReference>
<dbReference type="PIR" id="A29575">
    <property type="entry name" value="FRRTL"/>
</dbReference>
<dbReference type="PIR" id="I54774">
    <property type="entry name" value="I54774"/>
</dbReference>
<dbReference type="RefSeq" id="NP_071945.3">
    <property type="nucleotide sequence ID" value="NM_022500.4"/>
</dbReference>
<dbReference type="RefSeq" id="XP_002726683.1">
    <property type="nucleotide sequence ID" value="XM_002726637.5"/>
</dbReference>
<dbReference type="RefSeq" id="XP_002729599.1">
    <property type="nucleotide sequence ID" value="XM_002729553.5"/>
</dbReference>
<dbReference type="SMR" id="P02793"/>
<dbReference type="BioGRID" id="247961">
    <property type="interactions" value="1"/>
</dbReference>
<dbReference type="FunCoup" id="P02793">
    <property type="interactions" value="294"/>
</dbReference>
<dbReference type="IntAct" id="P02793">
    <property type="interactions" value="2"/>
</dbReference>
<dbReference type="STRING" id="10116.ENSRNOP00000028315"/>
<dbReference type="iPTMnet" id="P02793"/>
<dbReference type="PhosphoSitePlus" id="P02793"/>
<dbReference type="jPOST" id="P02793"/>
<dbReference type="PaxDb" id="10116-ENSRNOP00000028315"/>
<dbReference type="GeneID" id="29292"/>
<dbReference type="KEGG" id="rno:29292"/>
<dbReference type="UCSC" id="RGD:61813">
    <property type="organism name" value="rat"/>
</dbReference>
<dbReference type="AGR" id="RGD:2322860"/>
<dbReference type="AGR" id="RGD:61813"/>
<dbReference type="CTD" id="14325"/>
<dbReference type="RGD" id="61813">
    <property type="gene designation" value="Ftl1"/>
</dbReference>
<dbReference type="VEuPathDB" id="HostDB:ENSRNOG00000031506"/>
<dbReference type="VEuPathDB" id="HostDB:ENSRNOG00000064385"/>
<dbReference type="eggNOG" id="KOG2332">
    <property type="taxonomic scope" value="Eukaryota"/>
</dbReference>
<dbReference type="HOGENOM" id="CLU_065681_4_0_1"/>
<dbReference type="InParanoid" id="P02793"/>
<dbReference type="OrthoDB" id="186462at2759"/>
<dbReference type="PhylomeDB" id="P02793"/>
<dbReference type="TreeFam" id="TF313885"/>
<dbReference type="Reactome" id="R-RNO-432722">
    <property type="pathway name" value="Golgi Associated Vesicle Biogenesis"/>
</dbReference>
<dbReference type="Reactome" id="R-RNO-6798695">
    <property type="pathway name" value="Neutrophil degranulation"/>
</dbReference>
<dbReference type="Reactome" id="R-RNO-917937">
    <property type="pathway name" value="Iron uptake and transport"/>
</dbReference>
<dbReference type="PRO" id="PR:P02793"/>
<dbReference type="Proteomes" id="UP000002494">
    <property type="component" value="Chromosome 1"/>
</dbReference>
<dbReference type="Proteomes" id="UP000002494">
    <property type="component" value="Chromosome 5"/>
</dbReference>
<dbReference type="Bgee" id="ENSRNOG00000020843">
    <property type="expression patterns" value="Expressed in kidney and 19 other cell types or tissues"/>
</dbReference>
<dbReference type="GO" id="GO:0044754">
    <property type="term" value="C:autolysosome"/>
    <property type="evidence" value="ECO:0000266"/>
    <property type="project" value="RGD"/>
</dbReference>
<dbReference type="GO" id="GO:0005776">
    <property type="term" value="C:autophagosome"/>
    <property type="evidence" value="ECO:0007669"/>
    <property type="project" value="UniProtKB-SubCell"/>
</dbReference>
<dbReference type="GO" id="GO:0005737">
    <property type="term" value="C:cytoplasm"/>
    <property type="evidence" value="ECO:0000318"/>
    <property type="project" value="GO_Central"/>
</dbReference>
<dbReference type="GO" id="GO:0031410">
    <property type="term" value="C:cytoplasmic vesicle"/>
    <property type="evidence" value="ECO:0007669"/>
    <property type="project" value="UniProtKB-KW"/>
</dbReference>
<dbReference type="GO" id="GO:0070288">
    <property type="term" value="C:ferritin complex"/>
    <property type="evidence" value="ECO:0000250"/>
    <property type="project" value="UniProtKB"/>
</dbReference>
<dbReference type="GO" id="GO:0008199">
    <property type="term" value="F:ferric iron binding"/>
    <property type="evidence" value="ECO:0000318"/>
    <property type="project" value="GO_Central"/>
</dbReference>
<dbReference type="GO" id="GO:0008198">
    <property type="term" value="F:ferrous iron binding"/>
    <property type="evidence" value="ECO:0000318"/>
    <property type="project" value="GO_Central"/>
</dbReference>
<dbReference type="GO" id="GO:0042802">
    <property type="term" value="F:identical protein binding"/>
    <property type="evidence" value="ECO:0000266"/>
    <property type="project" value="RGD"/>
</dbReference>
<dbReference type="GO" id="GO:0005506">
    <property type="term" value="F:iron ion binding"/>
    <property type="evidence" value="ECO:0000250"/>
    <property type="project" value="UniProtKB"/>
</dbReference>
<dbReference type="GO" id="GO:0006879">
    <property type="term" value="P:intracellular iron ion homeostasis"/>
    <property type="evidence" value="ECO:0000304"/>
    <property type="project" value="RGD"/>
</dbReference>
<dbReference type="GO" id="GO:0006826">
    <property type="term" value="P:iron ion transport"/>
    <property type="evidence" value="ECO:0007669"/>
    <property type="project" value="InterPro"/>
</dbReference>
<dbReference type="GO" id="GO:0010288">
    <property type="term" value="P:response to lead ion"/>
    <property type="evidence" value="ECO:0000270"/>
    <property type="project" value="RGD"/>
</dbReference>
<dbReference type="CDD" id="cd00904">
    <property type="entry name" value="Ferritin"/>
    <property type="match status" value="1"/>
</dbReference>
<dbReference type="FunFam" id="1.20.1260.10:FF:000009">
    <property type="entry name" value="Ferritin light chain"/>
    <property type="match status" value="1"/>
</dbReference>
<dbReference type="Gene3D" id="1.20.1260.10">
    <property type="match status" value="1"/>
</dbReference>
<dbReference type="InterPro" id="IPR001519">
    <property type="entry name" value="Ferritin"/>
</dbReference>
<dbReference type="InterPro" id="IPR012347">
    <property type="entry name" value="Ferritin-like"/>
</dbReference>
<dbReference type="InterPro" id="IPR009040">
    <property type="entry name" value="Ferritin-like_diiron"/>
</dbReference>
<dbReference type="InterPro" id="IPR009078">
    <property type="entry name" value="Ferritin-like_SF"/>
</dbReference>
<dbReference type="InterPro" id="IPR014034">
    <property type="entry name" value="Ferritin_CS"/>
</dbReference>
<dbReference type="InterPro" id="IPR008331">
    <property type="entry name" value="Ferritin_DPS_dom"/>
</dbReference>
<dbReference type="PANTHER" id="PTHR11431">
    <property type="entry name" value="FERRITIN"/>
    <property type="match status" value="1"/>
</dbReference>
<dbReference type="PANTHER" id="PTHR11431:SF47">
    <property type="entry name" value="FERRITIN LIGHT CHAIN"/>
    <property type="match status" value="1"/>
</dbReference>
<dbReference type="Pfam" id="PF00210">
    <property type="entry name" value="Ferritin"/>
    <property type="match status" value="1"/>
</dbReference>
<dbReference type="SUPFAM" id="SSF47240">
    <property type="entry name" value="Ferritin-like"/>
    <property type="match status" value="1"/>
</dbReference>
<dbReference type="PROSITE" id="PS00540">
    <property type="entry name" value="FERRITIN_1"/>
    <property type="match status" value="1"/>
</dbReference>
<dbReference type="PROSITE" id="PS00204">
    <property type="entry name" value="FERRITIN_2"/>
    <property type="match status" value="1"/>
</dbReference>
<dbReference type="PROSITE" id="PS50905">
    <property type="entry name" value="FERRITIN_LIKE"/>
    <property type="match status" value="1"/>
</dbReference>
<feature type="chain" id="PRO_0000201066" description="Ferritin light chain 1">
    <location>
        <begin position="1"/>
        <end position="183"/>
    </location>
</feature>
<feature type="domain" description="Ferritin-like diiron" evidence="4">
    <location>
        <begin position="7"/>
        <end position="156"/>
    </location>
</feature>
<feature type="binding site" evidence="4">
    <location>
        <position position="54"/>
    </location>
    <ligand>
        <name>Fe cation</name>
        <dbReference type="ChEBI" id="CHEBI:24875"/>
    </ligand>
</feature>
<feature type="binding site" evidence="4">
    <location>
        <position position="57"/>
    </location>
    <ligand>
        <name>Fe cation</name>
        <dbReference type="ChEBI" id="CHEBI:24875"/>
    </ligand>
</feature>
<feature type="binding site" evidence="4">
    <location>
        <position position="58"/>
    </location>
    <ligand>
        <name>Fe cation</name>
        <dbReference type="ChEBI" id="CHEBI:24875"/>
    </ligand>
</feature>
<feature type="binding site" evidence="4">
    <location>
        <position position="61"/>
    </location>
    <ligand>
        <name>Fe cation</name>
        <dbReference type="ChEBI" id="CHEBI:24875"/>
    </ligand>
</feature>
<feature type="binding site" evidence="4">
    <location>
        <position position="64"/>
    </location>
    <ligand>
        <name>Fe cation</name>
        <dbReference type="ChEBI" id="CHEBI:24875"/>
    </ligand>
</feature>
<feature type="sequence conflict" description="In Ref. 1; AAA41154." evidence="5" ref="1">
    <original>E</original>
    <variation>K</variation>
    <location>
        <position position="98"/>
    </location>
</feature>
<feature type="sequence conflict" description="In Ref. 1; AAA41154." evidence="5" ref="1">
    <original>RT</original>
    <variation>QA</variation>
    <location>
        <begin position="121"/>
        <end position="122"/>
    </location>
</feature>
<feature type="sequence conflict" description="In Ref. 3; AAA41152." evidence="5" ref="3">
    <original>L</original>
    <variation>F</variation>
    <location>
        <position position="126"/>
    </location>
</feature>
<feature type="sequence conflict" description="In Ref. 1; AAA41154." evidence="5" ref="1">
    <original>V</original>
    <variation>W</variation>
    <location>
        <position position="155"/>
    </location>
</feature>
<feature type="sequence conflict" description="In Ref. 1; AAA41154 and 2; AAA41155." evidence="5" ref="1 2">
    <original>A</original>
    <variation>Q</variation>
    <location>
        <position position="156"/>
    </location>
</feature>
<name>FRIL1_RAT</name>
<gene>
    <name type="primary">Ftl1</name>
    <name type="synonym">Ftl</name>
</gene>
<proteinExistence type="evidence at protein level"/>
<accession>P02793</accession>
<accession>Q6P7T1</accession>
<reference key="1">
    <citation type="journal article" date="1984" name="J. Biol. Chem.">
        <title>Conservation in rat liver of light and heavy subunit sequences of mammalian ferritin. Presence of unique octopeptide in the light subunit.</title>
        <authorList>
            <person name="Leibold E.A."/>
            <person name="Aziz N."/>
            <person name="Brown A.J.P."/>
            <person name="Munro H.N."/>
        </authorList>
    </citation>
    <scope>NUCLEOTIDE SEQUENCE [MRNA]</scope>
    <source>
        <tissue>Liver</tissue>
    </source>
</reference>
<reference key="2">
    <citation type="journal article" date="1987" name="J. Biol. Chem.">
        <title>Characterization and evolution of the expressed rat ferritin light subunit gene and its pseudogene family. Conservation of sequences within noncoding regions of ferritin genes.</title>
        <authorList>
            <person name="Leibold E.A."/>
            <person name="Munro H.N."/>
        </authorList>
    </citation>
    <scope>NUCLEOTIDE SEQUENCE [GENOMIC DNA]</scope>
    <source>
        <tissue>Liver</tissue>
    </source>
</reference>
<reference key="3">
    <citation type="journal article" date="1992" name="Int. J. Cancer">
        <title>Isolation of cDNA clones corresponding to genes differentially expressed in two colon-carcinoma cell lines differing by their tumorigenicity.</title>
        <authorList>
            <person name="Denis M.G."/>
        </authorList>
    </citation>
    <scope>NUCLEOTIDE SEQUENCE [MRNA]</scope>
</reference>
<reference key="4">
    <citation type="journal article" date="2004" name="Genome Res.">
        <title>The status, quality, and expansion of the NIH full-length cDNA project: the Mammalian Gene Collection (MGC).</title>
        <authorList>
            <consortium name="The MGC Project Team"/>
        </authorList>
    </citation>
    <scope>NUCLEOTIDE SEQUENCE [LARGE SCALE MRNA]</scope>
    <source>
        <tissue>Ovary</tissue>
        <tissue>Pituitary</tissue>
    </source>
</reference>
<reference key="5">
    <citation type="submission" date="2006-11" db="UniProtKB">
        <authorList>
            <person name="Lubec G."/>
            <person name="Afjehi-Sadat L."/>
        </authorList>
    </citation>
    <scope>PROTEIN SEQUENCE OF 106-137</scope>
    <scope>IDENTIFICATION BY MASS SPECTROMETRY</scope>
    <source>
        <strain>Sprague-Dawley</strain>
        <tissue>Spinal cord</tissue>
    </source>
</reference>
<keyword id="KW-0963">Cytoplasm</keyword>
<keyword id="KW-0968">Cytoplasmic vesicle</keyword>
<keyword id="KW-0903">Direct protein sequencing</keyword>
<keyword id="KW-0408">Iron</keyword>
<keyword id="KW-0409">Iron storage</keyword>
<keyword id="KW-0458">Lysosome</keyword>
<keyword id="KW-0479">Metal-binding</keyword>
<keyword id="KW-1185">Reference proteome</keyword>
<sequence length="183" mass="20749">MTSQIRQNYSTEVEAAVNRLVNLHLRASYTYLSLGFFFDRDDVALEGVGHFFRELAEEKREGAERLLKLQNERGGRALFQDVQKPSQDEWGKTLEAMEAALALEKNLNQALLDLHALGSARTDPHLCDFLESHFLDKEVKLIKKMGNHLTNLRRVAGPQPAQTGVAQASLGEYLFERLTLKHD</sequence>